<reference key="1">
    <citation type="submission" date="2007-11" db="EMBL/GenBank/DDBJ databases">
        <authorList>
            <consortium name="The Salmonella enterica serovar Paratyphi B Genome Sequencing Project"/>
            <person name="McClelland M."/>
            <person name="Sanderson E.K."/>
            <person name="Porwollik S."/>
            <person name="Spieth J."/>
            <person name="Clifton W.S."/>
            <person name="Fulton R."/>
            <person name="Cordes M."/>
            <person name="Wollam A."/>
            <person name="Shah N."/>
            <person name="Pepin K."/>
            <person name="Bhonagiri V."/>
            <person name="Nash W."/>
            <person name="Johnson M."/>
            <person name="Thiruvilangam P."/>
            <person name="Wilson R."/>
        </authorList>
    </citation>
    <scope>NUCLEOTIDE SEQUENCE [LARGE SCALE GENOMIC DNA]</scope>
    <source>
        <strain>ATCC BAA-1250 / SPB7</strain>
    </source>
</reference>
<dbReference type="EC" id="7.6.2.13" evidence="1"/>
<dbReference type="EMBL" id="CP000886">
    <property type="protein sequence ID" value="ABX70338.1"/>
    <property type="molecule type" value="Genomic_DNA"/>
</dbReference>
<dbReference type="RefSeq" id="WP_001167248.1">
    <property type="nucleotide sequence ID" value="NC_010102.1"/>
</dbReference>
<dbReference type="SMR" id="A9MZG1"/>
<dbReference type="KEGG" id="spq:SPAB_05047"/>
<dbReference type="PATRIC" id="fig|1016998.12.peg.4738"/>
<dbReference type="HOGENOM" id="CLU_000604_92_3_6"/>
<dbReference type="BioCyc" id="SENT1016998:SPAB_RS20540-MONOMER"/>
<dbReference type="Proteomes" id="UP000008556">
    <property type="component" value="Chromosome"/>
</dbReference>
<dbReference type="GO" id="GO:0005886">
    <property type="term" value="C:plasma membrane"/>
    <property type="evidence" value="ECO:0007669"/>
    <property type="project" value="UniProtKB-SubCell"/>
</dbReference>
<dbReference type="GO" id="GO:0005524">
    <property type="term" value="F:ATP binding"/>
    <property type="evidence" value="ECO:0007669"/>
    <property type="project" value="UniProtKB-KW"/>
</dbReference>
<dbReference type="GO" id="GO:0016887">
    <property type="term" value="F:ATP hydrolysis activity"/>
    <property type="evidence" value="ECO:0007669"/>
    <property type="project" value="InterPro"/>
</dbReference>
<dbReference type="CDD" id="cd03216">
    <property type="entry name" value="ABC_Carb_Monos_I"/>
    <property type="match status" value="1"/>
</dbReference>
<dbReference type="CDD" id="cd03215">
    <property type="entry name" value="ABC_Carb_Monos_II"/>
    <property type="match status" value="1"/>
</dbReference>
<dbReference type="Gene3D" id="3.40.50.300">
    <property type="entry name" value="P-loop containing nucleotide triphosphate hydrolases"/>
    <property type="match status" value="2"/>
</dbReference>
<dbReference type="InterPro" id="IPR003593">
    <property type="entry name" value="AAA+_ATPase"/>
</dbReference>
<dbReference type="InterPro" id="IPR050107">
    <property type="entry name" value="ABC_carbohydrate_import_ATPase"/>
</dbReference>
<dbReference type="InterPro" id="IPR003439">
    <property type="entry name" value="ABC_transporter-like_ATP-bd"/>
</dbReference>
<dbReference type="InterPro" id="IPR017871">
    <property type="entry name" value="ABC_transporter-like_CS"/>
</dbReference>
<dbReference type="InterPro" id="IPR027417">
    <property type="entry name" value="P-loop_NTPase"/>
</dbReference>
<dbReference type="NCBIfam" id="NF011967">
    <property type="entry name" value="PRK15439.1"/>
    <property type="match status" value="1"/>
</dbReference>
<dbReference type="PANTHER" id="PTHR43790:SF2">
    <property type="entry name" value="AUTOINDUCER 2 IMPORT ATP-BINDING PROTEIN LSRA"/>
    <property type="match status" value="1"/>
</dbReference>
<dbReference type="PANTHER" id="PTHR43790">
    <property type="entry name" value="CARBOHYDRATE TRANSPORT ATP-BINDING PROTEIN MG119-RELATED"/>
    <property type="match status" value="1"/>
</dbReference>
<dbReference type="Pfam" id="PF00005">
    <property type="entry name" value="ABC_tran"/>
    <property type="match status" value="2"/>
</dbReference>
<dbReference type="SMART" id="SM00382">
    <property type="entry name" value="AAA"/>
    <property type="match status" value="2"/>
</dbReference>
<dbReference type="SUPFAM" id="SSF52540">
    <property type="entry name" value="P-loop containing nucleoside triphosphate hydrolases"/>
    <property type="match status" value="2"/>
</dbReference>
<dbReference type="PROSITE" id="PS00211">
    <property type="entry name" value="ABC_TRANSPORTER_1"/>
    <property type="match status" value="1"/>
</dbReference>
<dbReference type="PROSITE" id="PS50893">
    <property type="entry name" value="ABC_TRANSPORTER_2"/>
    <property type="match status" value="2"/>
</dbReference>
<gene>
    <name type="primary">lsrA</name>
    <name type="ordered locus">SPAB_05047</name>
</gene>
<protein>
    <recommendedName>
        <fullName evidence="1">Autoinducer 2 import ATP-binding protein LsrA</fullName>
        <shortName evidence="1">AI-2 import ATP-binding protein LsrA</shortName>
        <ecNumber evidence="1">7.6.2.13</ecNumber>
    </recommendedName>
</protein>
<comment type="function">
    <text evidence="1">Part of the ABC transporter complex LsrABCD involved in autoinducer 2 (AI-2) import. Responsible for energy coupling to the transport system.</text>
</comment>
<comment type="catalytic activity">
    <reaction evidence="1">
        <text>ATP + H2O + (2R,4S)-2-methyl-2,3,3,4-tetrahydroxytetrahydrofuran-[AI-2-binding protein]Side 1 = ADP + phosphate + (2R,4S)-2-methyl-2,3,3,4-tetrahydroxytetrahydrofuranSide 2 + [AI-2-binding protein]Side 1.</text>
        <dbReference type="EC" id="7.6.2.13"/>
    </reaction>
</comment>
<comment type="subunit">
    <text evidence="1">The complex is composed of two ATP-binding proteins (LsrA), two transmembrane proteins (LsrC and LsrD) and a solute-binding protein (LsrB).</text>
</comment>
<comment type="subcellular location">
    <subcellularLocation>
        <location evidence="1">Cell inner membrane</location>
        <topology evidence="1">Peripheral membrane protein</topology>
    </subcellularLocation>
</comment>
<comment type="similarity">
    <text evidence="3">Belongs to the ABC transporter superfamily. AI-2 autoinducer porter (TC 3.A.1.2.8) family.</text>
</comment>
<evidence type="ECO:0000250" key="1">
    <source>
        <dbReference type="UniProtKB" id="P77257"/>
    </source>
</evidence>
<evidence type="ECO:0000255" key="2">
    <source>
        <dbReference type="PROSITE-ProRule" id="PRU00434"/>
    </source>
</evidence>
<evidence type="ECO:0000305" key="3"/>
<proteinExistence type="inferred from homology"/>
<keyword id="KW-0067">ATP-binding</keyword>
<keyword id="KW-0997">Cell inner membrane</keyword>
<keyword id="KW-1003">Cell membrane</keyword>
<keyword id="KW-0472">Membrane</keyword>
<keyword id="KW-0547">Nucleotide-binding</keyword>
<keyword id="KW-0677">Repeat</keyword>
<keyword id="KW-1278">Translocase</keyword>
<keyword id="KW-0813">Transport</keyword>
<feature type="chain" id="PRO_0000351302" description="Autoinducer 2 import ATP-binding protein LsrA">
    <location>
        <begin position="1"/>
        <end position="511"/>
    </location>
</feature>
<feature type="domain" description="ABC transporter 1" evidence="2">
    <location>
        <begin position="12"/>
        <end position="240"/>
    </location>
</feature>
<feature type="domain" description="ABC transporter 2" evidence="2">
    <location>
        <begin position="263"/>
        <end position="503"/>
    </location>
</feature>
<feature type="binding site" evidence="2">
    <location>
        <begin position="44"/>
        <end position="51"/>
    </location>
    <ligand>
        <name>ATP</name>
        <dbReference type="ChEBI" id="CHEBI:30616"/>
    </ligand>
</feature>
<sequence>MQISHNTASPLICVQNIYKSYSGVEVLKGIDFTLHAGEVHALLGGNGAGKSTLMKIIAGIVPPDGGTIDIAGVRCSHLTPLKAHQYGIYLVPQEPLLFPSLSVRENILFGLQGRQASTEKMQQLLKAMGCQLDPASAAGTLDVADRQIVEIMRGLMRDSRILILDEPTASLTPAETDRLFTRLQELLKKGVGIVFISHKLPEIRQLAHCVSVMRDGKIALFGKTHDLSTDEIIQAITPATQGVSLSANQKLWLELPGSRPQNERGATVLALESLTGEGFMNINLEVRAGEILGLAGLVGAGRTELAETLYGIRPVNAGRMLFNGEEINALTTQQRLQLGLVYLPEDRQSSGLYLDASLAWNVCSLTHNQKGFWIKPQRDNATLERYHRALNIKLNNAEQAARTLSGGNQQKVLIAKCLEASPQLLIVDEPTRGVDVSARSDIYQLLRSIAQQNVAVLFISSDLEEIEQMADRVYVMHQGELGGPALCGEEINVDTIMHVAFGEHGASEATC</sequence>
<accession>A9MZG1</accession>
<organism>
    <name type="scientific">Salmonella paratyphi B (strain ATCC BAA-1250 / SPB7)</name>
    <dbReference type="NCBI Taxonomy" id="1016998"/>
    <lineage>
        <taxon>Bacteria</taxon>
        <taxon>Pseudomonadati</taxon>
        <taxon>Pseudomonadota</taxon>
        <taxon>Gammaproteobacteria</taxon>
        <taxon>Enterobacterales</taxon>
        <taxon>Enterobacteriaceae</taxon>
        <taxon>Salmonella</taxon>
    </lineage>
</organism>
<name>LSRA_SALPB</name>